<proteinExistence type="inferred from homology"/>
<accession>A0A3G1DJI9</accession>
<name>MFM4_PHOSM</name>
<comment type="function">
    <text evidence="1 3 4 5 6 9">Acyltransferase; part of the gene cluster that mediates the biosynthesis of squalestatin S1 (SQS1, also known as zaragozic acid A), a heavily oxidized fungal polyketide that offers potent cholesterol lowering activity by targeting squalene synthase (SS) (PubMed:27056201). SQS1 is composed of a 2,8-dioxobicyclic[3.2.1]octane-3,4,5-tricarboxyclic acid core that is connected to two lipophilic polyketide arms (PubMed:27056201). These initial steps feature the priming of an unusual benzoic acid starter unit onto the highly reducing polyketide synthase pks2, followed by oxaloacetate extension and product release to generate a tricarboxylic acid containing product (By similarity). The phenylalanine ammonia lyase (PAL) M7 and the acyl-CoA ligase M9 are involved in transforming phenylalanine into benzoyl-CoA (By similarity). The citrate synthase-like protein R3 is involved in connecting the C-alpha-carbons of the hexaketide chain and oxaloacetate to afford the tricarboxylic acid unit (By similarity). The potential hydrolytic enzymes, M8 and M10, are in close proximity to pks2 and may participate in product release (By similarity). On the other side, the tetraketide arm is synthesized by a the squalestatin tetraketide synthase pks1 and enzymatically esterified to the core in the last biosynthetic step, by the acetyltransferase M4 (PubMed:11251290, PubMed:15489970, PubMed:28106181). The biosynthesis of the tetraketide must involve 3 rounds of chain extension (PubMed:11251290, PubMed:15489970, PubMed:28106181). After the first and second rounds methyl-transfer occurs, and in all rounds of extension the ketoreductase and dehydratase are active (PubMed:11251290, PubMed:15489970, PubMed:28106181). The enoyl reductase and C-MeT of pks1 are not active in the final round of extension (PubMed:11251290, PubMed:15489970, PubMed:28106181). The acetyltransferase M4 appears to have a broad substrate selectivity for its acyl CoA substrate, allowing the in vitro synthesis of novel squalestatins (Probable). The biosynthesis of SQS1 requires several oxidative steps likely performed by oxidoreductases M1, R1 and R2 (Probable). Finally, in support of the identification of the cluster as being responsible for SQS1 production, the cluster contains a gene encoding a putative squalene synthase (SS) R6, suggesting a likely mechanism for self-resistance (Probable).</text>
</comment>
<comment type="pathway">
    <text evidence="5">Secondary metabolite biosynthesis.</text>
</comment>
<comment type="subunit">
    <text evidence="2">Monomer.</text>
</comment>
<comment type="similarity">
    <text evidence="8">Belongs to the plant acyltransferase family.</text>
</comment>
<organism>
    <name type="scientific">Phoma sp. (strain ATCC 20986 / MF5453)</name>
    <dbReference type="NCBI Taxonomy" id="1828523"/>
    <lineage>
        <taxon>Eukaryota</taxon>
        <taxon>Fungi</taxon>
        <taxon>Dikarya</taxon>
        <taxon>Ascomycota</taxon>
        <taxon>Pezizomycotina</taxon>
        <taxon>Dothideomycetes</taxon>
        <taxon>Pleosporomycetidae</taxon>
        <taxon>Pleosporales</taxon>
        <taxon>Pleosporineae</taxon>
        <taxon>Didymellaceae</taxon>
        <taxon>Phoma</taxon>
    </lineage>
</organism>
<gene>
    <name evidence="7" type="primary">M4</name>
</gene>
<evidence type="ECO:0000250" key="1">
    <source>
        <dbReference type="UniProtKB" id="A0A345BJP2"/>
    </source>
</evidence>
<evidence type="ECO:0000250" key="2">
    <source>
        <dbReference type="UniProtKB" id="Q70PR7"/>
    </source>
</evidence>
<evidence type="ECO:0000269" key="3">
    <source>
    </source>
</evidence>
<evidence type="ECO:0000269" key="4">
    <source>
    </source>
</evidence>
<evidence type="ECO:0000269" key="5">
    <source>
    </source>
</evidence>
<evidence type="ECO:0000269" key="6">
    <source>
    </source>
</evidence>
<evidence type="ECO:0000303" key="7">
    <source>
    </source>
</evidence>
<evidence type="ECO:0000305" key="8"/>
<evidence type="ECO:0000305" key="9">
    <source>
    </source>
</evidence>
<feature type="chain" id="PRO_0000447834" description="Acyltransferase M4">
    <location>
        <begin position="1"/>
        <end position="496"/>
    </location>
</feature>
<feature type="active site" description="Proton acceptor" evidence="2">
    <location>
        <position position="163"/>
    </location>
</feature>
<keyword id="KW-0012">Acyltransferase</keyword>
<keyword id="KW-0808">Transferase</keyword>
<dbReference type="EC" id="2.3.1.-" evidence="9"/>
<dbReference type="EMBL" id="KU946987">
    <property type="protein sequence ID" value="AMY15061.1"/>
    <property type="molecule type" value="Genomic_DNA"/>
</dbReference>
<dbReference type="SMR" id="A0A3G1DJI9"/>
<dbReference type="GO" id="GO:0016747">
    <property type="term" value="F:acyltransferase activity, transferring groups other than amino-acyl groups"/>
    <property type="evidence" value="ECO:0007669"/>
    <property type="project" value="TreeGrafter"/>
</dbReference>
<dbReference type="Gene3D" id="3.30.559.10">
    <property type="entry name" value="Chloramphenicol acetyltransferase-like domain"/>
    <property type="match status" value="2"/>
</dbReference>
<dbReference type="InterPro" id="IPR023213">
    <property type="entry name" value="CAT-like_dom_sf"/>
</dbReference>
<dbReference type="InterPro" id="IPR050317">
    <property type="entry name" value="Plant_Fungal_Acyltransferase"/>
</dbReference>
<dbReference type="PANTHER" id="PTHR31642:SF310">
    <property type="entry name" value="FATTY ALCOHOL:CAFFEOYL-COA ACYLTRANSFERASE"/>
    <property type="match status" value="1"/>
</dbReference>
<dbReference type="PANTHER" id="PTHR31642">
    <property type="entry name" value="TRICHOTHECENE 3-O-ACETYLTRANSFERASE"/>
    <property type="match status" value="1"/>
</dbReference>
<dbReference type="Pfam" id="PF02458">
    <property type="entry name" value="Transferase"/>
    <property type="match status" value="1"/>
</dbReference>
<sequence length="496" mass="54949">MPSILTDFNVRPYEDVPAQIIELSVPDAAAPKHCPIQLLYWPVEGKSNFIRGYENLKDGLSRLLADVPVLVGRLERGSKGDPRYLAVTISSDASVELEYEDISADDTIASYDDLVRNGFPTTGFKDIVSPKMSLGPMVEGSPMMCAKLNLIKGGAILAYGFSHVLADGWANSELGRLWALHAAHVSQGIGFERQKAATPDDEIRRQLSTLPDFDADAPLDAFLQITPSEEATNFLHKDVLAAEKAKKKAREKMMATLLAAGEVPELPRFTFWRFTPEKLKELKQAATSSDASKWISTMDALAGLFWSRIARIQGQSSNGHQQSRCIFALDIRRRLQQPVPLAYVGNVFSPVDAICPLDELESDSLGLKAAAQSMRQANKGWTQPRWEAWLNKIMSLPLDQTLDTSQEFRLQKHNMYFNDYSAFQLNTASWGAPFGQPARTRCLRSGLAGGAAGVWVCPKFPDGSLEVWLTSTAAIQKSLFEDATFNRYAEFVCQYT</sequence>
<protein>
    <recommendedName>
        <fullName evidence="7">Acyltransferase M4</fullName>
        <shortName evidence="7">AT M4</shortName>
        <ecNumber evidence="9">2.3.1.-</ecNumber>
    </recommendedName>
    <alternativeName>
        <fullName evidence="7">Squalestatin S1 biosynthesis cluster protein M4</fullName>
    </alternativeName>
</protein>
<reference key="1">
    <citation type="journal article" date="2016" name="Chem. Commun. (Camb.)">
        <title>Identification of genes encoding squalestatin S1 biosynthesis and in vitro production of new squalestatin analogues.</title>
        <authorList>
            <person name="Bonsch B."/>
            <person name="Belt V."/>
            <person name="Bartel C."/>
            <person name="Duensing N."/>
            <person name="Koziol M."/>
            <person name="Lazarus C.M."/>
            <person name="Bailey A.M."/>
            <person name="Simpson T.J."/>
            <person name="Cox R.J."/>
        </authorList>
    </citation>
    <scope>NUCLEOTIDE SEQUENCE [GENOMIC DNA]</scope>
    <scope>FUNCTION</scope>
</reference>
<reference key="2">
    <citation type="journal article" date="2001" name="Chem. Biol.">
        <title>Design and utility of oligonucleotide gene probes for fungal polyketide synthases.</title>
        <authorList>
            <person name="Nicholson T.P."/>
            <person name="Rudd B.A."/>
            <person name="Dawson M."/>
            <person name="Lazarus C.M."/>
            <person name="Simpson T.J."/>
            <person name="Cox R.J."/>
        </authorList>
    </citation>
    <scope>FUNCTION</scope>
</reference>
<reference key="3">
    <citation type="journal article" date="2004" name="Chem. Commun. (Camb.)">
        <title>Rapid cloning and expression of a fungal polyketide synthase gene involved in squalestatin biosynthesis.</title>
        <authorList>
            <person name="Cox R.J."/>
            <person name="Glod F."/>
            <person name="Hurley D."/>
            <person name="Lazarus C.M."/>
            <person name="Nicholson T.P."/>
            <person name="Rudd B.A."/>
            <person name="Simpson T.J."/>
            <person name="Wilkinson B."/>
            <person name="Zhang Y."/>
        </authorList>
    </citation>
    <scope>FUNCTION</scope>
</reference>
<reference key="4">
    <citation type="journal article" date="2017" name="Chem. Commun. (Camb.)">
        <title>In vitro kinetic study of the squalestatin tetraketide synthase dehydratase reveals the stereochemical course of a fungal highly reducing polyketide synthase.</title>
        <authorList>
            <person name="Liddle E."/>
            <person name="Scott A."/>
            <person name="Han L.C."/>
            <person name="Ivison D."/>
            <person name="Simpson T.J."/>
            <person name="Willis C.L."/>
            <person name="Cox R.J."/>
        </authorList>
    </citation>
    <scope>FUNCTION</scope>
</reference>